<accession>A7FZ78</accession>
<dbReference type="EMBL" id="CP000726">
    <property type="protein sequence ID" value="ABS34393.1"/>
    <property type="molecule type" value="Genomic_DNA"/>
</dbReference>
<dbReference type="RefSeq" id="WP_003357259.1">
    <property type="nucleotide sequence ID" value="NC_009697.1"/>
</dbReference>
<dbReference type="SMR" id="A7FZ78"/>
<dbReference type="GeneID" id="92940259"/>
<dbReference type="KEGG" id="cba:CLB_3546"/>
<dbReference type="HOGENOM" id="CLU_086499_3_2_9"/>
<dbReference type="GO" id="GO:0022625">
    <property type="term" value="C:cytosolic large ribosomal subunit"/>
    <property type="evidence" value="ECO:0007669"/>
    <property type="project" value="TreeGrafter"/>
</dbReference>
<dbReference type="GO" id="GO:0003729">
    <property type="term" value="F:mRNA binding"/>
    <property type="evidence" value="ECO:0007669"/>
    <property type="project" value="TreeGrafter"/>
</dbReference>
<dbReference type="GO" id="GO:0003735">
    <property type="term" value="F:structural constituent of ribosome"/>
    <property type="evidence" value="ECO:0007669"/>
    <property type="project" value="InterPro"/>
</dbReference>
<dbReference type="GO" id="GO:0006412">
    <property type="term" value="P:translation"/>
    <property type="evidence" value="ECO:0007669"/>
    <property type="project" value="UniProtKB-UniRule"/>
</dbReference>
<dbReference type="CDD" id="cd00387">
    <property type="entry name" value="Ribosomal_L7_L12"/>
    <property type="match status" value="1"/>
</dbReference>
<dbReference type="FunFam" id="1.20.5.710:FF:000002">
    <property type="entry name" value="50S ribosomal protein L7/L12"/>
    <property type="match status" value="1"/>
</dbReference>
<dbReference type="FunFam" id="3.30.1390.10:FF:000001">
    <property type="entry name" value="50S ribosomal protein L7/L12"/>
    <property type="match status" value="1"/>
</dbReference>
<dbReference type="Gene3D" id="3.30.1390.10">
    <property type="match status" value="1"/>
</dbReference>
<dbReference type="Gene3D" id="1.20.5.710">
    <property type="entry name" value="Single helix bin"/>
    <property type="match status" value="1"/>
</dbReference>
<dbReference type="HAMAP" id="MF_00368">
    <property type="entry name" value="Ribosomal_bL12"/>
    <property type="match status" value="1"/>
</dbReference>
<dbReference type="InterPro" id="IPR000206">
    <property type="entry name" value="Ribosomal_bL12"/>
</dbReference>
<dbReference type="InterPro" id="IPR013823">
    <property type="entry name" value="Ribosomal_bL12_C"/>
</dbReference>
<dbReference type="InterPro" id="IPR014719">
    <property type="entry name" value="Ribosomal_bL12_C/ClpS-like"/>
</dbReference>
<dbReference type="InterPro" id="IPR008932">
    <property type="entry name" value="Ribosomal_bL12_oligo"/>
</dbReference>
<dbReference type="InterPro" id="IPR036235">
    <property type="entry name" value="Ribosomal_bL12_oligo_N_sf"/>
</dbReference>
<dbReference type="NCBIfam" id="TIGR00855">
    <property type="entry name" value="L12"/>
    <property type="match status" value="1"/>
</dbReference>
<dbReference type="PANTHER" id="PTHR45987">
    <property type="entry name" value="39S RIBOSOMAL PROTEIN L12"/>
    <property type="match status" value="1"/>
</dbReference>
<dbReference type="PANTHER" id="PTHR45987:SF4">
    <property type="entry name" value="LARGE RIBOSOMAL SUBUNIT PROTEIN BL12M"/>
    <property type="match status" value="1"/>
</dbReference>
<dbReference type="Pfam" id="PF00542">
    <property type="entry name" value="Ribosomal_L12"/>
    <property type="match status" value="1"/>
</dbReference>
<dbReference type="Pfam" id="PF16320">
    <property type="entry name" value="Ribosomal_L12_N"/>
    <property type="match status" value="1"/>
</dbReference>
<dbReference type="SUPFAM" id="SSF54736">
    <property type="entry name" value="ClpS-like"/>
    <property type="match status" value="1"/>
</dbReference>
<dbReference type="SUPFAM" id="SSF48300">
    <property type="entry name" value="Ribosomal protein L7/12, oligomerisation (N-terminal) domain"/>
    <property type="match status" value="1"/>
</dbReference>
<comment type="function">
    <text evidence="1">Forms part of the ribosomal stalk which helps the ribosome interact with GTP-bound translation factors. Is thus essential for accurate translation.</text>
</comment>
<comment type="subunit">
    <text evidence="1">Homodimer. Part of the ribosomal stalk of the 50S ribosomal subunit. Forms a multimeric L10(L12)X complex, where L10 forms an elongated spine to which 2 to 4 L12 dimers bind in a sequential fashion. Binds GTP-bound translation factors.</text>
</comment>
<comment type="similarity">
    <text evidence="1">Belongs to the bacterial ribosomal protein bL12 family.</text>
</comment>
<feature type="chain" id="PRO_1000006988" description="Large ribosomal subunit protein bL12">
    <location>
        <begin position="1"/>
        <end position="123"/>
    </location>
</feature>
<sequence length="123" mass="12663">MKKEEIIQAIKEMTVLELNELVEACEEEFGVSAAAPVAVAGAGAAAGAGAAEEKTEFDVVLADAGSEKIKVIKAVREVTGLGLKEAKALVDGAPKTLKEAASKEDGEAIKAKLEEVGAKVELK</sequence>
<organism>
    <name type="scientific">Clostridium botulinum (strain ATCC 19397 / Type A)</name>
    <dbReference type="NCBI Taxonomy" id="441770"/>
    <lineage>
        <taxon>Bacteria</taxon>
        <taxon>Bacillati</taxon>
        <taxon>Bacillota</taxon>
        <taxon>Clostridia</taxon>
        <taxon>Eubacteriales</taxon>
        <taxon>Clostridiaceae</taxon>
        <taxon>Clostridium</taxon>
    </lineage>
</organism>
<name>RL7_CLOB1</name>
<gene>
    <name evidence="1" type="primary">rplL</name>
    <name type="ordered locus">CLB_3546</name>
</gene>
<proteinExistence type="inferred from homology"/>
<evidence type="ECO:0000255" key="1">
    <source>
        <dbReference type="HAMAP-Rule" id="MF_00368"/>
    </source>
</evidence>
<evidence type="ECO:0000305" key="2"/>
<keyword id="KW-0687">Ribonucleoprotein</keyword>
<keyword id="KW-0689">Ribosomal protein</keyword>
<reference key="1">
    <citation type="journal article" date="2007" name="PLoS ONE">
        <title>Analysis of the neurotoxin complex genes in Clostridium botulinum A1-A4 and B1 strains: BoNT/A3, /Ba4 and /B1 clusters are located within plasmids.</title>
        <authorList>
            <person name="Smith T.J."/>
            <person name="Hill K.K."/>
            <person name="Foley B.T."/>
            <person name="Detter J.C."/>
            <person name="Munk A.C."/>
            <person name="Bruce D.C."/>
            <person name="Doggett N.A."/>
            <person name="Smith L.A."/>
            <person name="Marks J.D."/>
            <person name="Xie G."/>
            <person name="Brettin T.S."/>
        </authorList>
    </citation>
    <scope>NUCLEOTIDE SEQUENCE [LARGE SCALE GENOMIC DNA]</scope>
    <source>
        <strain>ATCC 19397 / Type A</strain>
    </source>
</reference>
<protein>
    <recommendedName>
        <fullName evidence="1">Large ribosomal subunit protein bL12</fullName>
    </recommendedName>
    <alternativeName>
        <fullName evidence="2">50S ribosomal protein L7/L12</fullName>
    </alternativeName>
</protein>